<protein>
    <recommendedName>
        <fullName evidence="1">Tryptophan--tRNA ligase</fullName>
        <ecNumber evidence="1">6.1.1.2</ecNumber>
    </recommendedName>
    <alternativeName>
        <fullName evidence="1">Tryptophanyl-tRNA synthetase</fullName>
        <shortName evidence="1">TrpRS</shortName>
    </alternativeName>
</protein>
<sequence length="336" mass="37795">MPDDSTAPKRILSGAQPTGQLHLGNYLGAVRNWVSEQRQYDSYFCVVDLHALTVPQEAAELRAATRRTAALYLACGIDPERSTVFVQSHVSAHTELTWLFNCLTPINWLERMIQFKEKAIKLGEEVGIGLFDYPVLQAADILLYEPHLVPVGEDQRQHLELTRDIARRFNDRYGESLRVPEMLIRKEGARVMSLQDGTSKMSKSDPSDLSRLNLLDAPEKLRDKIKRAKSDAVMGLKFDPARPECTNLLTIYQLLSGESPEAVEARFADAGFGRFKPILADLVIEYLRPIRERYDAIAGESGYLEGILREGALRASKVAGLTLERIRDRMGLLPPF</sequence>
<proteinExistence type="inferred from homology"/>
<organism>
    <name type="scientific">Gloeobacter violaceus (strain ATCC 29082 / PCC 7421)</name>
    <dbReference type="NCBI Taxonomy" id="251221"/>
    <lineage>
        <taxon>Bacteria</taxon>
        <taxon>Bacillati</taxon>
        <taxon>Cyanobacteriota</taxon>
        <taxon>Cyanophyceae</taxon>
        <taxon>Gloeobacterales</taxon>
        <taxon>Gloeobacteraceae</taxon>
        <taxon>Gloeobacter</taxon>
    </lineage>
</organism>
<reference key="1">
    <citation type="journal article" date="2003" name="DNA Res.">
        <title>Complete genome structure of Gloeobacter violaceus PCC 7421, a cyanobacterium that lacks thylakoids.</title>
        <authorList>
            <person name="Nakamura Y."/>
            <person name="Kaneko T."/>
            <person name="Sato S."/>
            <person name="Mimuro M."/>
            <person name="Miyashita H."/>
            <person name="Tsuchiya T."/>
            <person name="Sasamoto S."/>
            <person name="Watanabe A."/>
            <person name="Kawashima K."/>
            <person name="Kishida Y."/>
            <person name="Kiyokawa C."/>
            <person name="Kohara M."/>
            <person name="Matsumoto M."/>
            <person name="Matsuno A."/>
            <person name="Nakazaki N."/>
            <person name="Shimpo S."/>
            <person name="Takeuchi C."/>
            <person name="Yamada M."/>
            <person name="Tabata S."/>
        </authorList>
    </citation>
    <scope>NUCLEOTIDE SEQUENCE [LARGE SCALE GENOMIC DNA]</scope>
    <source>
        <strain>ATCC 29082 / PCC 7421</strain>
    </source>
</reference>
<evidence type="ECO:0000255" key="1">
    <source>
        <dbReference type="HAMAP-Rule" id="MF_00140"/>
    </source>
</evidence>
<comment type="function">
    <text evidence="1">Catalyzes the attachment of tryptophan to tRNA(Trp).</text>
</comment>
<comment type="catalytic activity">
    <reaction evidence="1">
        <text>tRNA(Trp) + L-tryptophan + ATP = L-tryptophyl-tRNA(Trp) + AMP + diphosphate + H(+)</text>
        <dbReference type="Rhea" id="RHEA:24080"/>
        <dbReference type="Rhea" id="RHEA-COMP:9671"/>
        <dbReference type="Rhea" id="RHEA-COMP:9705"/>
        <dbReference type="ChEBI" id="CHEBI:15378"/>
        <dbReference type="ChEBI" id="CHEBI:30616"/>
        <dbReference type="ChEBI" id="CHEBI:33019"/>
        <dbReference type="ChEBI" id="CHEBI:57912"/>
        <dbReference type="ChEBI" id="CHEBI:78442"/>
        <dbReference type="ChEBI" id="CHEBI:78535"/>
        <dbReference type="ChEBI" id="CHEBI:456215"/>
        <dbReference type="EC" id="6.1.1.2"/>
    </reaction>
</comment>
<comment type="subunit">
    <text evidence="1">Homodimer.</text>
</comment>
<comment type="subcellular location">
    <subcellularLocation>
        <location evidence="1">Cytoplasm</location>
    </subcellularLocation>
</comment>
<comment type="similarity">
    <text evidence="1">Belongs to the class-I aminoacyl-tRNA synthetase family.</text>
</comment>
<accession>Q7NCG8</accession>
<feature type="chain" id="PRO_0000136633" description="Tryptophan--tRNA ligase">
    <location>
        <begin position="1"/>
        <end position="336"/>
    </location>
</feature>
<feature type="short sequence motif" description="'HIGH' region" evidence="1">
    <location>
        <begin position="17"/>
        <end position="25"/>
    </location>
</feature>
<feature type="short sequence motif" description="'KMSKS' region" evidence="1">
    <location>
        <begin position="200"/>
        <end position="204"/>
    </location>
</feature>
<feature type="binding site" evidence="1">
    <location>
        <begin position="16"/>
        <end position="18"/>
    </location>
    <ligand>
        <name>ATP</name>
        <dbReference type="ChEBI" id="CHEBI:30616"/>
    </ligand>
</feature>
<feature type="binding site" evidence="1">
    <location>
        <begin position="24"/>
        <end position="25"/>
    </location>
    <ligand>
        <name>ATP</name>
        <dbReference type="ChEBI" id="CHEBI:30616"/>
    </ligand>
</feature>
<feature type="binding site" evidence="1">
    <location>
        <position position="140"/>
    </location>
    <ligand>
        <name>L-tryptophan</name>
        <dbReference type="ChEBI" id="CHEBI:57912"/>
    </ligand>
</feature>
<feature type="binding site" evidence="1">
    <location>
        <begin position="152"/>
        <end position="154"/>
    </location>
    <ligand>
        <name>ATP</name>
        <dbReference type="ChEBI" id="CHEBI:30616"/>
    </ligand>
</feature>
<feature type="binding site" evidence="1">
    <location>
        <position position="191"/>
    </location>
    <ligand>
        <name>ATP</name>
        <dbReference type="ChEBI" id="CHEBI:30616"/>
    </ligand>
</feature>
<feature type="binding site" evidence="1">
    <location>
        <begin position="200"/>
        <end position="204"/>
    </location>
    <ligand>
        <name>ATP</name>
        <dbReference type="ChEBI" id="CHEBI:30616"/>
    </ligand>
</feature>
<keyword id="KW-0030">Aminoacyl-tRNA synthetase</keyword>
<keyword id="KW-0067">ATP-binding</keyword>
<keyword id="KW-0963">Cytoplasm</keyword>
<keyword id="KW-0436">Ligase</keyword>
<keyword id="KW-0547">Nucleotide-binding</keyword>
<keyword id="KW-0648">Protein biosynthesis</keyword>
<keyword id="KW-1185">Reference proteome</keyword>
<gene>
    <name evidence="1" type="primary">trpS</name>
    <name type="ordered locus">glr3011</name>
</gene>
<dbReference type="EC" id="6.1.1.2" evidence="1"/>
<dbReference type="EMBL" id="BA000045">
    <property type="protein sequence ID" value="BAC90952.1"/>
    <property type="molecule type" value="Genomic_DNA"/>
</dbReference>
<dbReference type="RefSeq" id="NP_925957.1">
    <property type="nucleotide sequence ID" value="NC_005125.1"/>
</dbReference>
<dbReference type="RefSeq" id="WP_011143004.1">
    <property type="nucleotide sequence ID" value="NC_005125.1"/>
</dbReference>
<dbReference type="SMR" id="Q7NCG8"/>
<dbReference type="FunCoup" id="Q7NCG8">
    <property type="interactions" value="239"/>
</dbReference>
<dbReference type="STRING" id="251221.gene:10760515"/>
<dbReference type="EnsemblBacteria" id="BAC90952">
    <property type="protein sequence ID" value="BAC90952"/>
    <property type="gene ID" value="BAC90952"/>
</dbReference>
<dbReference type="KEGG" id="gvi:glr3011"/>
<dbReference type="PATRIC" id="fig|251221.4.peg.3038"/>
<dbReference type="eggNOG" id="COG0180">
    <property type="taxonomic scope" value="Bacteria"/>
</dbReference>
<dbReference type="HOGENOM" id="CLU_029244_1_1_3"/>
<dbReference type="InParanoid" id="Q7NCG8"/>
<dbReference type="OrthoDB" id="9801042at2"/>
<dbReference type="PhylomeDB" id="Q7NCG8"/>
<dbReference type="Proteomes" id="UP000000557">
    <property type="component" value="Chromosome"/>
</dbReference>
<dbReference type="GO" id="GO:0005737">
    <property type="term" value="C:cytoplasm"/>
    <property type="evidence" value="ECO:0007669"/>
    <property type="project" value="UniProtKB-SubCell"/>
</dbReference>
<dbReference type="GO" id="GO:0005524">
    <property type="term" value="F:ATP binding"/>
    <property type="evidence" value="ECO:0007669"/>
    <property type="project" value="UniProtKB-UniRule"/>
</dbReference>
<dbReference type="GO" id="GO:0004830">
    <property type="term" value="F:tryptophan-tRNA ligase activity"/>
    <property type="evidence" value="ECO:0000318"/>
    <property type="project" value="GO_Central"/>
</dbReference>
<dbReference type="GO" id="GO:0006436">
    <property type="term" value="P:tryptophanyl-tRNA aminoacylation"/>
    <property type="evidence" value="ECO:0000318"/>
    <property type="project" value="GO_Central"/>
</dbReference>
<dbReference type="CDD" id="cd00806">
    <property type="entry name" value="TrpRS_core"/>
    <property type="match status" value="1"/>
</dbReference>
<dbReference type="FunFam" id="1.10.240.10:FF:000002">
    <property type="entry name" value="Tryptophan--tRNA ligase"/>
    <property type="match status" value="1"/>
</dbReference>
<dbReference type="Gene3D" id="3.40.50.620">
    <property type="entry name" value="HUPs"/>
    <property type="match status" value="1"/>
</dbReference>
<dbReference type="Gene3D" id="1.10.240.10">
    <property type="entry name" value="Tyrosyl-Transfer RNA Synthetase"/>
    <property type="match status" value="1"/>
</dbReference>
<dbReference type="HAMAP" id="MF_00140_B">
    <property type="entry name" value="Trp_tRNA_synth_B"/>
    <property type="match status" value="1"/>
</dbReference>
<dbReference type="InterPro" id="IPR001412">
    <property type="entry name" value="aa-tRNA-synth_I_CS"/>
</dbReference>
<dbReference type="InterPro" id="IPR002305">
    <property type="entry name" value="aa-tRNA-synth_Ic"/>
</dbReference>
<dbReference type="InterPro" id="IPR014729">
    <property type="entry name" value="Rossmann-like_a/b/a_fold"/>
</dbReference>
<dbReference type="InterPro" id="IPR002306">
    <property type="entry name" value="Trp-tRNA-ligase"/>
</dbReference>
<dbReference type="InterPro" id="IPR024109">
    <property type="entry name" value="Trp-tRNA-ligase_bac-type"/>
</dbReference>
<dbReference type="InterPro" id="IPR050203">
    <property type="entry name" value="Trp-tRNA_synthetase"/>
</dbReference>
<dbReference type="NCBIfam" id="TIGR00233">
    <property type="entry name" value="trpS"/>
    <property type="match status" value="1"/>
</dbReference>
<dbReference type="PANTHER" id="PTHR43766">
    <property type="entry name" value="TRYPTOPHAN--TRNA LIGASE, MITOCHONDRIAL"/>
    <property type="match status" value="1"/>
</dbReference>
<dbReference type="PANTHER" id="PTHR43766:SF1">
    <property type="entry name" value="TRYPTOPHAN--TRNA LIGASE, MITOCHONDRIAL"/>
    <property type="match status" value="1"/>
</dbReference>
<dbReference type="Pfam" id="PF00579">
    <property type="entry name" value="tRNA-synt_1b"/>
    <property type="match status" value="1"/>
</dbReference>
<dbReference type="PRINTS" id="PR01039">
    <property type="entry name" value="TRNASYNTHTRP"/>
</dbReference>
<dbReference type="SUPFAM" id="SSF52374">
    <property type="entry name" value="Nucleotidylyl transferase"/>
    <property type="match status" value="1"/>
</dbReference>
<dbReference type="PROSITE" id="PS00178">
    <property type="entry name" value="AA_TRNA_LIGASE_I"/>
    <property type="match status" value="1"/>
</dbReference>
<name>SYW_GLOVI</name>